<sequence>MESGHRFDAQTLHSFIQAVFRQMGSEEQEAKLVADHLIAANLAGHDSHGIGMIPSYVRSWSQGHLQINHHAKTVKEAGAAVTLDGDRAFGQVAAHEAMALGIEKAHQHGIAAVALHNSHHIGRIGYWAEQCAAAGFVSIHFVSVVGIPMVAPFHGRDSRFGTNPFCVVFPRKDNFPLLLDYATSAIAFGKTRVAWHKGVPVPPGCLIDVNGVPTTNPAVMQESPLGSLLTFAEHKGYALAAMCEILGGALSGGKTTHQETLQTSPDAILNCMTTIIINPELFGAPDCNAQTEAFAEWVKASPHDDDKPILLPGEWEVNTRRERQKQGIPLDAGSWQAICDAARQIGMPEETLQAFCQQLAS</sequence>
<name>HCXB_ECOLI</name>
<protein>
    <recommendedName>
        <fullName evidence="3">Hydroxycarboxylate dehydrogenase B</fullName>
        <ecNumber evidence="1">1.1.1.-</ecNumber>
    </recommendedName>
    <alternativeName>
        <fullName evidence="5">2-oxoglutarate reductase</fullName>
    </alternativeName>
    <alternativeName>
        <fullName evidence="5">Hydroxyphenylpyruvate reductase</fullName>
        <ecNumber evidence="1">1.1.1.237</ecNumber>
    </alternativeName>
    <alternativeName>
        <fullName evidence="5">Phenylpyruvate reductase</fullName>
    </alternativeName>
</protein>
<accession>P30178</accession>
<accession>P75778</accession>
<gene>
    <name evidence="3" type="primary">hcxB</name>
    <name evidence="6" type="synonym">ybiC</name>
    <name type="ordered locus">b0801</name>
    <name type="ordered locus">JW0786</name>
</gene>
<dbReference type="EC" id="1.1.1.-" evidence="1"/>
<dbReference type="EC" id="1.1.1.237" evidence="1"/>
<dbReference type="EMBL" id="L02123">
    <property type="protein sequence ID" value="AAA53657.1"/>
    <property type="molecule type" value="Genomic_DNA"/>
</dbReference>
<dbReference type="EMBL" id="U00096">
    <property type="protein sequence ID" value="AAC73888.1"/>
    <property type="molecule type" value="Genomic_DNA"/>
</dbReference>
<dbReference type="EMBL" id="AP009048">
    <property type="protein sequence ID" value="BAA35467.1"/>
    <property type="molecule type" value="Genomic_DNA"/>
</dbReference>
<dbReference type="PIR" id="A64817">
    <property type="entry name" value="A64817"/>
</dbReference>
<dbReference type="RefSeq" id="NP_415322.1">
    <property type="nucleotide sequence ID" value="NC_000913.3"/>
</dbReference>
<dbReference type="RefSeq" id="WP_000443530.1">
    <property type="nucleotide sequence ID" value="NZ_STEB01000019.1"/>
</dbReference>
<dbReference type="PDB" id="2G8Y">
    <property type="method" value="X-ray"/>
    <property type="resolution" value="2.15 A"/>
    <property type="chains" value="A/B=1-361"/>
</dbReference>
<dbReference type="PDBsum" id="2G8Y"/>
<dbReference type="SMR" id="P30178"/>
<dbReference type="BioGRID" id="4259966">
    <property type="interactions" value="10"/>
</dbReference>
<dbReference type="BioGRID" id="849786">
    <property type="interactions" value="1"/>
</dbReference>
<dbReference type="DIP" id="DIP-11426N"/>
<dbReference type="FunCoup" id="P30178">
    <property type="interactions" value="56"/>
</dbReference>
<dbReference type="STRING" id="511145.b0801"/>
<dbReference type="jPOST" id="P30178"/>
<dbReference type="PaxDb" id="511145-b0801"/>
<dbReference type="EnsemblBacteria" id="AAC73888">
    <property type="protein sequence ID" value="AAC73888"/>
    <property type="gene ID" value="b0801"/>
</dbReference>
<dbReference type="GeneID" id="93776629"/>
<dbReference type="GeneID" id="945412"/>
<dbReference type="KEGG" id="ecj:JW0786"/>
<dbReference type="KEGG" id="eco:b0801"/>
<dbReference type="KEGG" id="ecoc:C3026_05055"/>
<dbReference type="PATRIC" id="fig|1411691.4.peg.1477"/>
<dbReference type="EchoBASE" id="EB1541"/>
<dbReference type="eggNOG" id="COG2055">
    <property type="taxonomic scope" value="Bacteria"/>
</dbReference>
<dbReference type="HOGENOM" id="CLU_040452_1_0_6"/>
<dbReference type="InParanoid" id="P30178"/>
<dbReference type="OMA" id="VLAHNCA"/>
<dbReference type="OrthoDB" id="9769447at2"/>
<dbReference type="PhylomeDB" id="P30178"/>
<dbReference type="BioCyc" id="EcoCyc:EG11581-MONOMER"/>
<dbReference type="BioCyc" id="MetaCyc:EG11581-MONOMER"/>
<dbReference type="EvolutionaryTrace" id="P30178"/>
<dbReference type="PRO" id="PR:P30178"/>
<dbReference type="Proteomes" id="UP000000625">
    <property type="component" value="Chromosome"/>
</dbReference>
<dbReference type="GO" id="GO:0005829">
    <property type="term" value="C:cytosol"/>
    <property type="evidence" value="ECO:0000314"/>
    <property type="project" value="EcoCyc"/>
</dbReference>
<dbReference type="GO" id="GO:0047029">
    <property type="term" value="F:(R)-4-hydroxyphenyllactate dehydrogenase (NADP+) activity"/>
    <property type="evidence" value="ECO:0007669"/>
    <property type="project" value="RHEA"/>
</dbReference>
<dbReference type="GO" id="GO:0047995">
    <property type="term" value="F:hydroxyphenylpyruvate reductase activity"/>
    <property type="evidence" value="ECO:0000314"/>
    <property type="project" value="EcoCyc"/>
</dbReference>
<dbReference type="Gene3D" id="1.10.1530.10">
    <property type="match status" value="2"/>
</dbReference>
<dbReference type="Gene3D" id="3.30.1370.60">
    <property type="entry name" value="Hypothetical oxidoreductase yiak, domain 2"/>
    <property type="match status" value="1"/>
</dbReference>
<dbReference type="Gene3D" id="1.20.5.460">
    <property type="entry name" value="Single helix bin"/>
    <property type="match status" value="1"/>
</dbReference>
<dbReference type="InterPro" id="IPR043144">
    <property type="entry name" value="Mal/L-sulf/L-lact_DH-like_ah"/>
</dbReference>
<dbReference type="InterPro" id="IPR043143">
    <property type="entry name" value="Mal/L-sulf/L-lact_DH-like_NADP"/>
</dbReference>
<dbReference type="InterPro" id="IPR036111">
    <property type="entry name" value="Mal/L-sulfo/L-lacto_DH-like_sf"/>
</dbReference>
<dbReference type="InterPro" id="IPR003767">
    <property type="entry name" value="Malate/L-lactate_DH-like"/>
</dbReference>
<dbReference type="NCBIfam" id="NF007504">
    <property type="entry name" value="PRK10098.1"/>
    <property type="match status" value="1"/>
</dbReference>
<dbReference type="PANTHER" id="PTHR11091:SF0">
    <property type="entry name" value="MALATE DEHYDROGENASE"/>
    <property type="match status" value="1"/>
</dbReference>
<dbReference type="PANTHER" id="PTHR11091">
    <property type="entry name" value="OXIDOREDUCTASE-RELATED"/>
    <property type="match status" value="1"/>
</dbReference>
<dbReference type="Pfam" id="PF02615">
    <property type="entry name" value="Ldh_2"/>
    <property type="match status" value="1"/>
</dbReference>
<dbReference type="SUPFAM" id="SSF89733">
    <property type="entry name" value="L-sulfolactate dehydrogenase-like"/>
    <property type="match status" value="1"/>
</dbReference>
<feature type="chain" id="PRO_0000083840" description="Hydroxycarboxylate dehydrogenase B">
    <location>
        <begin position="1"/>
        <end position="361"/>
    </location>
</feature>
<feature type="binding site" evidence="2 7">
    <location>
        <position position="48"/>
    </location>
    <ligand>
        <name>NAD(+)</name>
        <dbReference type="ChEBI" id="CHEBI:57540"/>
    </ligand>
</feature>
<feature type="binding site" evidence="2 7">
    <location>
        <begin position="122"/>
        <end position="124"/>
    </location>
    <ligand>
        <name>NAD(+)</name>
        <dbReference type="ChEBI" id="CHEBI:57540"/>
    </ligand>
</feature>
<feature type="binding site" evidence="2 7">
    <location>
        <begin position="178"/>
        <end position="182"/>
    </location>
    <ligand>
        <name>NAD(+)</name>
        <dbReference type="ChEBI" id="CHEBI:57540"/>
    </ligand>
</feature>
<feature type="binding site" evidence="2 7">
    <location>
        <position position="234"/>
    </location>
    <ligand>
        <name>NAD(+)</name>
        <dbReference type="ChEBI" id="CHEBI:57540"/>
    </ligand>
</feature>
<feature type="binding site" evidence="2 7">
    <location>
        <position position="270"/>
    </location>
    <ligand>
        <name>NAD(+)</name>
        <dbReference type="ChEBI" id="CHEBI:57540"/>
    </ligand>
</feature>
<feature type="binding site" evidence="2 7">
    <location>
        <begin position="313"/>
        <end position="316"/>
    </location>
    <ligand>
        <name>NAD(+)</name>
        <dbReference type="ChEBI" id="CHEBI:57540"/>
    </ligand>
</feature>
<feature type="sequence conflict" description="In Ref. 1; AAA53657." evidence="4" ref="1">
    <original>MG</original>
    <variation>IP</variation>
    <location>
        <begin position="23"/>
        <end position="24"/>
    </location>
</feature>
<feature type="strand" evidence="8">
    <location>
        <begin position="5"/>
        <end position="7"/>
    </location>
</feature>
<feature type="helix" evidence="8">
    <location>
        <begin position="9"/>
        <end position="23"/>
    </location>
</feature>
<feature type="helix" evidence="8">
    <location>
        <begin position="27"/>
        <end position="43"/>
    </location>
</feature>
<feature type="helix" evidence="8">
    <location>
        <begin position="46"/>
        <end position="48"/>
    </location>
</feature>
<feature type="helix" evidence="8">
    <location>
        <begin position="50"/>
        <end position="52"/>
    </location>
</feature>
<feature type="helix" evidence="8">
    <location>
        <begin position="53"/>
        <end position="61"/>
    </location>
</feature>
<feature type="strand" evidence="8">
    <location>
        <begin position="64"/>
        <end position="66"/>
    </location>
</feature>
<feature type="strand" evidence="8">
    <location>
        <begin position="72"/>
        <end position="77"/>
    </location>
</feature>
<feature type="strand" evidence="8">
    <location>
        <begin position="80"/>
        <end position="84"/>
    </location>
</feature>
<feature type="helix" evidence="8">
    <location>
        <begin position="90"/>
        <end position="108"/>
    </location>
</feature>
<feature type="strand" evidence="8">
    <location>
        <begin position="109"/>
        <end position="119"/>
    </location>
</feature>
<feature type="helix" evidence="8">
    <location>
        <begin position="124"/>
        <end position="133"/>
    </location>
</feature>
<feature type="strand" evidence="8">
    <location>
        <begin position="137"/>
        <end position="144"/>
    </location>
</feature>
<feature type="strand" evidence="8">
    <location>
        <begin position="165"/>
        <end position="171"/>
    </location>
</feature>
<feature type="strand" evidence="8">
    <location>
        <begin position="174"/>
        <end position="181"/>
    </location>
</feature>
<feature type="strand" evidence="8">
    <location>
        <begin position="183"/>
        <end position="186"/>
    </location>
</feature>
<feature type="helix" evidence="8">
    <location>
        <begin position="188"/>
        <end position="197"/>
    </location>
</feature>
<feature type="strand" evidence="8">
    <location>
        <begin position="205"/>
        <end position="207"/>
    </location>
</feature>
<feature type="helix" evidence="8">
    <location>
        <begin position="217"/>
        <end position="220"/>
    </location>
</feature>
<feature type="strand" evidence="8">
    <location>
        <begin position="222"/>
        <end position="224"/>
    </location>
</feature>
<feature type="turn" evidence="8">
    <location>
        <begin position="231"/>
        <end position="233"/>
    </location>
</feature>
<feature type="helix" evidence="8">
    <location>
        <begin position="234"/>
        <end position="246"/>
    </location>
</feature>
<feature type="turn" evidence="8">
    <location>
        <begin position="247"/>
        <end position="252"/>
    </location>
</feature>
<feature type="helix" evidence="8">
    <location>
        <begin position="258"/>
        <end position="260"/>
    </location>
</feature>
<feature type="strand" evidence="8">
    <location>
        <begin position="269"/>
        <end position="277"/>
    </location>
</feature>
<feature type="helix" evidence="8">
    <location>
        <begin position="279"/>
        <end position="281"/>
    </location>
</feature>
<feature type="helix" evidence="8">
    <location>
        <begin position="287"/>
        <end position="299"/>
    </location>
</feature>
<feature type="helix" evidence="8">
    <location>
        <begin position="314"/>
        <end position="326"/>
    </location>
</feature>
<feature type="strand" evidence="8">
    <location>
        <begin position="328"/>
        <end position="330"/>
    </location>
</feature>
<feature type="helix" evidence="8">
    <location>
        <begin position="332"/>
        <end position="344"/>
    </location>
</feature>
<feature type="helix" evidence="8">
    <location>
        <begin position="349"/>
        <end position="360"/>
    </location>
</feature>
<keyword id="KW-0002">3D-structure</keyword>
<keyword id="KW-0520">NAD</keyword>
<keyword id="KW-0521">NADP</keyword>
<keyword id="KW-0560">Oxidoreductase</keyword>
<keyword id="KW-1185">Reference proteome</keyword>
<proteinExistence type="evidence at protein level"/>
<organism>
    <name type="scientific">Escherichia coli (strain K12)</name>
    <dbReference type="NCBI Taxonomy" id="83333"/>
    <lineage>
        <taxon>Bacteria</taxon>
        <taxon>Pseudomonadati</taxon>
        <taxon>Pseudomonadota</taxon>
        <taxon>Gammaproteobacteria</taxon>
        <taxon>Enterobacterales</taxon>
        <taxon>Enterobacteriaceae</taxon>
        <taxon>Escherichia</taxon>
    </lineage>
</organism>
<evidence type="ECO:0000269" key="1">
    <source>
    </source>
</evidence>
<evidence type="ECO:0000269" key="2">
    <source ref="6"/>
</evidence>
<evidence type="ECO:0000303" key="3">
    <source>
    </source>
</evidence>
<evidence type="ECO:0000305" key="4"/>
<evidence type="ECO:0000305" key="5">
    <source>
    </source>
</evidence>
<evidence type="ECO:0000312" key="6">
    <source>
        <dbReference type="EMBL" id="AAC73888.1"/>
    </source>
</evidence>
<evidence type="ECO:0007744" key="7">
    <source>
        <dbReference type="PDB" id="2G8Y"/>
    </source>
</evidence>
<evidence type="ECO:0007829" key="8">
    <source>
        <dbReference type="PDB" id="2G8Y"/>
    </source>
</evidence>
<comment type="function">
    <text evidence="1">Catalyzes the NAD(P)H-dependent reduction of 2-oxoglutarate, phenylpyruvate and (4-hydroxyphenyl)pyruvate, leading to the respective 2-hydroxycarboxylate in vitro. Shows a preference for NADPH over NADH as a redox partner. Do not catalyze the reverse reactions.</text>
</comment>
<comment type="catalytic activity">
    <reaction evidence="1">
        <text>2-hydroxyglutarate + NADP(+) = 2-oxoglutarate + NADPH + H(+)</text>
        <dbReference type="Rhea" id="RHEA:52308"/>
        <dbReference type="ChEBI" id="CHEBI:11596"/>
        <dbReference type="ChEBI" id="CHEBI:15378"/>
        <dbReference type="ChEBI" id="CHEBI:16810"/>
        <dbReference type="ChEBI" id="CHEBI:57783"/>
        <dbReference type="ChEBI" id="CHEBI:58349"/>
    </reaction>
</comment>
<comment type="catalytic activity">
    <reaction evidence="1">
        <text>2-hydroxyglutarate + NAD(+) = 2-oxoglutarate + NADH + H(+)</text>
        <dbReference type="Rhea" id="RHEA:13449"/>
        <dbReference type="ChEBI" id="CHEBI:11596"/>
        <dbReference type="ChEBI" id="CHEBI:15378"/>
        <dbReference type="ChEBI" id="CHEBI:16810"/>
        <dbReference type="ChEBI" id="CHEBI:57540"/>
        <dbReference type="ChEBI" id="CHEBI:57945"/>
    </reaction>
</comment>
<comment type="catalytic activity">
    <reaction evidence="1">
        <text>3-phenyllactate + NADP(+) = 3-phenylpyruvate + NADPH + H(+)</text>
        <dbReference type="Rhea" id="RHEA:52692"/>
        <dbReference type="ChEBI" id="CHEBI:8100"/>
        <dbReference type="ChEBI" id="CHEBI:15378"/>
        <dbReference type="ChEBI" id="CHEBI:18005"/>
        <dbReference type="ChEBI" id="CHEBI:57783"/>
        <dbReference type="ChEBI" id="CHEBI:58349"/>
    </reaction>
</comment>
<comment type="catalytic activity">
    <reaction evidence="1">
        <text>3-phenyllactate + NAD(+) = 3-phenylpyruvate + NADH + H(+)</text>
        <dbReference type="Rhea" id="RHEA:52688"/>
        <dbReference type="ChEBI" id="CHEBI:8100"/>
        <dbReference type="ChEBI" id="CHEBI:15378"/>
        <dbReference type="ChEBI" id="CHEBI:18005"/>
        <dbReference type="ChEBI" id="CHEBI:57540"/>
        <dbReference type="ChEBI" id="CHEBI:57945"/>
    </reaction>
</comment>
<comment type="catalytic activity">
    <reaction evidence="1">
        <text>(2R)-2-hydroxy-3-(4-hydroxyphenyl)propanoate + NAD(+) = 3-(4-hydroxyphenyl)pyruvate + NADH + H(+)</text>
        <dbReference type="Rhea" id="RHEA:10780"/>
        <dbReference type="ChEBI" id="CHEBI:10980"/>
        <dbReference type="ChEBI" id="CHEBI:15378"/>
        <dbReference type="ChEBI" id="CHEBI:36242"/>
        <dbReference type="ChEBI" id="CHEBI:57540"/>
        <dbReference type="ChEBI" id="CHEBI:57945"/>
        <dbReference type="EC" id="1.1.1.237"/>
    </reaction>
</comment>
<comment type="catalytic activity">
    <reaction evidence="1">
        <text>(2R)-2-hydroxy-3-(4-hydroxyphenyl)propanoate + NADP(+) = 3-(4-hydroxyphenyl)pyruvate + NADPH + H(+)</text>
        <dbReference type="Rhea" id="RHEA:10776"/>
        <dbReference type="ChEBI" id="CHEBI:10980"/>
        <dbReference type="ChEBI" id="CHEBI:15378"/>
        <dbReference type="ChEBI" id="CHEBI:36242"/>
        <dbReference type="ChEBI" id="CHEBI:57783"/>
        <dbReference type="ChEBI" id="CHEBI:58349"/>
        <dbReference type="EC" id="1.1.1.237"/>
    </reaction>
</comment>
<comment type="catalytic activity">
    <reaction evidence="1">
        <text>(2R)-3-(3,4-dihydroxyphenyl)lactate + NADP(+) = 3-(3,4-dihydroxyphenyl)pyruvate + NADPH + H(+)</text>
        <dbReference type="Rhea" id="RHEA:57704"/>
        <dbReference type="ChEBI" id="CHEBI:15378"/>
        <dbReference type="ChEBI" id="CHEBI:29055"/>
        <dbReference type="ChEBI" id="CHEBI:57783"/>
        <dbReference type="ChEBI" id="CHEBI:58349"/>
        <dbReference type="ChEBI" id="CHEBI:71492"/>
        <dbReference type="EC" id="1.1.1.237"/>
    </reaction>
</comment>
<comment type="catalytic activity">
    <reaction evidence="1">
        <text>(2R)-3-(3,4-dihydroxyphenyl)lactate + NAD(+) = 3-(3,4-dihydroxyphenyl)pyruvate + NADH + H(+)</text>
        <dbReference type="Rhea" id="RHEA:57408"/>
        <dbReference type="ChEBI" id="CHEBI:15378"/>
        <dbReference type="ChEBI" id="CHEBI:29055"/>
        <dbReference type="ChEBI" id="CHEBI:57540"/>
        <dbReference type="ChEBI" id="CHEBI:57945"/>
        <dbReference type="ChEBI" id="CHEBI:71492"/>
        <dbReference type="EC" id="1.1.1.237"/>
    </reaction>
</comment>
<comment type="similarity">
    <text evidence="4">Belongs to the LDH2/MDH2 oxidoreductase family.</text>
</comment>
<reference key="1">
    <citation type="journal article" date="1994" name="Jpn. J. Genet.">
        <title>Structural analysis of the rhlE gene of Escherichia coli.</title>
        <authorList>
            <person name="Ohmori H."/>
        </authorList>
    </citation>
    <scope>NUCLEOTIDE SEQUENCE [GENOMIC DNA]</scope>
    <source>
        <strain>K12 / W3110 / ATCC 27325 / DSM 5911</strain>
    </source>
</reference>
<reference key="2">
    <citation type="journal article" date="1996" name="DNA Res.">
        <title>A 718-kb DNA sequence of the Escherichia coli K-12 genome corresponding to the 12.7-28.0 min region on the linkage map.</title>
        <authorList>
            <person name="Oshima T."/>
            <person name="Aiba H."/>
            <person name="Baba T."/>
            <person name="Fujita K."/>
            <person name="Hayashi K."/>
            <person name="Honjo A."/>
            <person name="Ikemoto K."/>
            <person name="Inada T."/>
            <person name="Itoh T."/>
            <person name="Kajihara M."/>
            <person name="Kanai K."/>
            <person name="Kashimoto K."/>
            <person name="Kimura S."/>
            <person name="Kitagawa M."/>
            <person name="Makino K."/>
            <person name="Masuda S."/>
            <person name="Miki T."/>
            <person name="Mizobuchi K."/>
            <person name="Mori H."/>
            <person name="Motomura K."/>
            <person name="Nakamura Y."/>
            <person name="Nashimoto H."/>
            <person name="Nishio Y."/>
            <person name="Saito N."/>
            <person name="Sampei G."/>
            <person name="Seki Y."/>
            <person name="Tagami H."/>
            <person name="Takemoto K."/>
            <person name="Wada C."/>
            <person name="Yamamoto Y."/>
            <person name="Yano M."/>
            <person name="Horiuchi T."/>
        </authorList>
    </citation>
    <scope>NUCLEOTIDE SEQUENCE [LARGE SCALE GENOMIC DNA]</scope>
    <source>
        <strain>K12 / W3110 / ATCC 27325 / DSM 5911</strain>
    </source>
</reference>
<reference key="3">
    <citation type="journal article" date="1997" name="Science">
        <title>The complete genome sequence of Escherichia coli K-12.</title>
        <authorList>
            <person name="Blattner F.R."/>
            <person name="Plunkett G. III"/>
            <person name="Bloch C.A."/>
            <person name="Perna N.T."/>
            <person name="Burland V."/>
            <person name="Riley M."/>
            <person name="Collado-Vides J."/>
            <person name="Glasner J.D."/>
            <person name="Rode C.K."/>
            <person name="Mayhew G.F."/>
            <person name="Gregor J."/>
            <person name="Davis N.W."/>
            <person name="Kirkpatrick H.A."/>
            <person name="Goeden M.A."/>
            <person name="Rose D.J."/>
            <person name="Mau B."/>
            <person name="Shao Y."/>
        </authorList>
    </citation>
    <scope>NUCLEOTIDE SEQUENCE [LARGE SCALE GENOMIC DNA]</scope>
    <source>
        <strain>K12 / MG1655 / ATCC 47076</strain>
    </source>
</reference>
<reference key="4">
    <citation type="journal article" date="2006" name="Mol. Syst. Biol.">
        <title>Highly accurate genome sequences of Escherichia coli K-12 strains MG1655 and W3110.</title>
        <authorList>
            <person name="Hayashi K."/>
            <person name="Morooka N."/>
            <person name="Yamamoto Y."/>
            <person name="Fujita K."/>
            <person name="Isono K."/>
            <person name="Choi S."/>
            <person name="Ohtsubo E."/>
            <person name="Baba T."/>
            <person name="Wanner B.L."/>
            <person name="Mori H."/>
            <person name="Horiuchi T."/>
        </authorList>
    </citation>
    <scope>NUCLEOTIDE SEQUENCE [LARGE SCALE GENOMIC DNA]</scope>
    <source>
        <strain>K12 / W3110 / ATCC 27325 / DSM 5911</strain>
    </source>
</reference>
<reference key="5">
    <citation type="journal article" date="2017" name="Nat. Methods">
        <title>Nontargeted in vitro metabolomics for high-throughput identification of novel enzymes in Escherichia coli.</title>
        <authorList>
            <person name="Sevin D.C."/>
            <person name="Fuhrer T."/>
            <person name="Zamboni N."/>
            <person name="Sauer U."/>
        </authorList>
    </citation>
    <scope>FUNCTION</scope>
    <scope>CATALYTIC ACTIVITY</scope>
    <source>
        <strain>K12</strain>
    </source>
</reference>
<reference key="6">
    <citation type="submission" date="2006-03" db="PDB data bank">
        <title>The structure of a putative malate/lactate dehydrogenase from E. coli.</title>
        <authorList>
            <person name="Cuff M.E."/>
            <person name="Skarina T."/>
            <person name="Edwards A."/>
            <person name="Savchenko A."/>
            <person name="Cymborowski M."/>
            <person name="Minor W."/>
            <person name="Joachimiak A."/>
        </authorList>
    </citation>
    <scope>X-RAY CRYSTALLOGRAPHY (2.15 ANGSTROMS) IN COMPLEX WITH NAD</scope>
</reference>